<protein>
    <recommendedName>
        <fullName evidence="1">Quinate/shikimate dehydrogenase</fullName>
        <ecNumber evidence="1">1.1.1.282</ecNumber>
    </recommendedName>
    <alternativeName>
        <fullName evidence="1">NAD-dependent shikimate 5-dehydrogenase</fullName>
    </alternativeName>
</protein>
<dbReference type="EC" id="1.1.1.282" evidence="1"/>
<dbReference type="EMBL" id="CP001063">
    <property type="protein sequence ID" value="ACD08594.1"/>
    <property type="molecule type" value="Genomic_DNA"/>
</dbReference>
<dbReference type="RefSeq" id="WP_000383469.1">
    <property type="nucleotide sequence ID" value="NC_010658.1"/>
</dbReference>
<dbReference type="SMR" id="B2U2J6"/>
<dbReference type="STRING" id="344609.SbBS512_E1895"/>
<dbReference type="GeneID" id="75171755"/>
<dbReference type="KEGG" id="sbc:SbBS512_E1895"/>
<dbReference type="HOGENOM" id="CLU_044063_4_4_6"/>
<dbReference type="UniPathway" id="UPA00053">
    <property type="reaction ID" value="UER00087"/>
</dbReference>
<dbReference type="Proteomes" id="UP000001030">
    <property type="component" value="Chromosome"/>
</dbReference>
<dbReference type="GO" id="GO:0030266">
    <property type="term" value="F:quinate 3-dehydrogenase (NAD+) activity"/>
    <property type="evidence" value="ECO:0007669"/>
    <property type="project" value="UniProtKB-UniRule"/>
</dbReference>
<dbReference type="GO" id="GO:0052733">
    <property type="term" value="F:quinate 3-dehydrogenase (NADP+) activity"/>
    <property type="evidence" value="ECO:0007669"/>
    <property type="project" value="InterPro"/>
</dbReference>
<dbReference type="GO" id="GO:0052734">
    <property type="term" value="F:shikimate 3-dehydrogenase (NAD+) activity"/>
    <property type="evidence" value="ECO:0007669"/>
    <property type="project" value="InterPro"/>
</dbReference>
<dbReference type="GO" id="GO:0004764">
    <property type="term" value="F:shikimate 3-dehydrogenase (NADP+) activity"/>
    <property type="evidence" value="ECO:0007669"/>
    <property type="project" value="UniProtKB-UniRule"/>
</dbReference>
<dbReference type="GO" id="GO:0008652">
    <property type="term" value="P:amino acid biosynthetic process"/>
    <property type="evidence" value="ECO:0007669"/>
    <property type="project" value="UniProtKB-KW"/>
</dbReference>
<dbReference type="GO" id="GO:0009073">
    <property type="term" value="P:aromatic amino acid family biosynthetic process"/>
    <property type="evidence" value="ECO:0007669"/>
    <property type="project" value="UniProtKB-KW"/>
</dbReference>
<dbReference type="GO" id="GO:0009423">
    <property type="term" value="P:chorismate biosynthetic process"/>
    <property type="evidence" value="ECO:0007669"/>
    <property type="project" value="UniProtKB-UniRule"/>
</dbReference>
<dbReference type="GO" id="GO:0019632">
    <property type="term" value="P:shikimate metabolic process"/>
    <property type="evidence" value="ECO:0007669"/>
    <property type="project" value="TreeGrafter"/>
</dbReference>
<dbReference type="CDD" id="cd01065">
    <property type="entry name" value="NAD_bind_Shikimate_DH"/>
    <property type="match status" value="1"/>
</dbReference>
<dbReference type="FunFam" id="3.40.50.10860:FF:000004">
    <property type="entry name" value="Quinate/shikimate dehydrogenase"/>
    <property type="match status" value="1"/>
</dbReference>
<dbReference type="FunFam" id="3.40.50.720:FF:000086">
    <property type="entry name" value="Quinate/shikimate dehydrogenase"/>
    <property type="match status" value="1"/>
</dbReference>
<dbReference type="Gene3D" id="3.40.50.10860">
    <property type="entry name" value="Leucine Dehydrogenase, chain A, domain 1"/>
    <property type="match status" value="1"/>
</dbReference>
<dbReference type="Gene3D" id="3.40.50.720">
    <property type="entry name" value="NAD(P)-binding Rossmann-like Domain"/>
    <property type="match status" value="1"/>
</dbReference>
<dbReference type="HAMAP" id="MF_00222">
    <property type="entry name" value="Shikimate_DH_AroE"/>
    <property type="match status" value="1"/>
</dbReference>
<dbReference type="HAMAP" id="MF_01578">
    <property type="entry name" value="Shikimate_DH_YdiB"/>
    <property type="match status" value="1"/>
</dbReference>
<dbReference type="InterPro" id="IPR046346">
    <property type="entry name" value="Aminoacid_DH-like_N_sf"/>
</dbReference>
<dbReference type="InterPro" id="IPR036291">
    <property type="entry name" value="NAD(P)-bd_dom_sf"/>
</dbReference>
<dbReference type="InterPro" id="IPR022872">
    <property type="entry name" value="Quinate/Shikimate_DH"/>
</dbReference>
<dbReference type="InterPro" id="IPR041121">
    <property type="entry name" value="SDH_C"/>
</dbReference>
<dbReference type="InterPro" id="IPR013708">
    <property type="entry name" value="Shikimate_DH-bd_N"/>
</dbReference>
<dbReference type="InterPro" id="IPR022893">
    <property type="entry name" value="Shikimate_DH_fam"/>
</dbReference>
<dbReference type="NCBIfam" id="NF009390">
    <property type="entry name" value="PRK12749.1"/>
    <property type="match status" value="1"/>
</dbReference>
<dbReference type="PANTHER" id="PTHR21089:SF1">
    <property type="entry name" value="BIFUNCTIONAL 3-DEHYDROQUINATE DEHYDRATASE_SHIKIMATE DEHYDROGENASE, CHLOROPLASTIC"/>
    <property type="match status" value="1"/>
</dbReference>
<dbReference type="PANTHER" id="PTHR21089">
    <property type="entry name" value="SHIKIMATE DEHYDROGENASE"/>
    <property type="match status" value="1"/>
</dbReference>
<dbReference type="Pfam" id="PF18317">
    <property type="entry name" value="SDH_C"/>
    <property type="match status" value="1"/>
</dbReference>
<dbReference type="Pfam" id="PF08501">
    <property type="entry name" value="Shikimate_dh_N"/>
    <property type="match status" value="1"/>
</dbReference>
<dbReference type="SUPFAM" id="SSF53223">
    <property type="entry name" value="Aminoacid dehydrogenase-like, N-terminal domain"/>
    <property type="match status" value="1"/>
</dbReference>
<dbReference type="SUPFAM" id="SSF51735">
    <property type="entry name" value="NAD(P)-binding Rossmann-fold domains"/>
    <property type="match status" value="1"/>
</dbReference>
<gene>
    <name evidence="1" type="primary">ydiB</name>
    <name type="ordered locus">SbBS512_E1895</name>
</gene>
<keyword id="KW-0028">Amino-acid biosynthesis</keyword>
<keyword id="KW-0057">Aromatic amino acid biosynthesis</keyword>
<keyword id="KW-0520">NAD</keyword>
<keyword id="KW-0521">NADP</keyword>
<keyword id="KW-0560">Oxidoreductase</keyword>
<keyword id="KW-1185">Reference proteome</keyword>
<accession>B2U2J6</accession>
<name>YDIB_SHIB3</name>
<sequence length="288" mass="31228">MDVTAKYELIGLMAYPIRHSLSPEMQNKALEKAGLPFTYMAFEVDNDSFPGAIEGLKALKMRGTGVSMPNKQLACEYVDELTPAAKLVGAINTIVNDDGYLRGYNTDGTGHIRAIKESGFDIKGKTMVLLGAGGASTAIGAQGAIEGLKEIKLFNRRDEFFDKALAFAQRVNENTDCVVTVTDLADQQAFAEALASADILTNGTKVGMKPLENESLVNDISLLHPGLLVTECVYNPHMTKLLQQAQQAGCKTIDGYGMLLWQGAEQFTLWTGKDFPLEYVKQVMGFGA</sequence>
<evidence type="ECO:0000255" key="1">
    <source>
        <dbReference type="HAMAP-Rule" id="MF_01578"/>
    </source>
</evidence>
<organism>
    <name type="scientific">Shigella boydii serotype 18 (strain CDC 3083-94 / BS512)</name>
    <dbReference type="NCBI Taxonomy" id="344609"/>
    <lineage>
        <taxon>Bacteria</taxon>
        <taxon>Pseudomonadati</taxon>
        <taxon>Pseudomonadota</taxon>
        <taxon>Gammaproteobacteria</taxon>
        <taxon>Enterobacterales</taxon>
        <taxon>Enterobacteriaceae</taxon>
        <taxon>Shigella</taxon>
    </lineage>
</organism>
<proteinExistence type="inferred from homology"/>
<reference key="1">
    <citation type="submission" date="2008-05" db="EMBL/GenBank/DDBJ databases">
        <title>Complete sequence of Shigella boydii serotype 18 strain BS512.</title>
        <authorList>
            <person name="Rasko D.A."/>
            <person name="Rosovitz M."/>
            <person name="Maurelli A.T."/>
            <person name="Myers G."/>
            <person name="Seshadri R."/>
            <person name="Cer R."/>
            <person name="Jiang L."/>
            <person name="Ravel J."/>
            <person name="Sebastian Y."/>
        </authorList>
    </citation>
    <scope>NUCLEOTIDE SEQUENCE [LARGE SCALE GENOMIC DNA]</scope>
    <source>
        <strain>CDC 3083-94 / BS512</strain>
    </source>
</reference>
<feature type="chain" id="PRO_1000147562" description="Quinate/shikimate dehydrogenase">
    <location>
        <begin position="1"/>
        <end position="288"/>
    </location>
</feature>
<feature type="binding site" evidence="1">
    <location>
        <position position="71"/>
    </location>
    <ligand>
        <name>substrate</name>
    </ligand>
</feature>
<feature type="binding site" evidence="1">
    <location>
        <position position="107"/>
    </location>
    <ligand>
        <name>substrate</name>
    </ligand>
</feature>
<feature type="binding site" evidence="1">
    <location>
        <begin position="132"/>
        <end position="135"/>
    </location>
    <ligand>
        <name>NAD(+)</name>
        <dbReference type="ChEBI" id="CHEBI:57540"/>
    </ligand>
</feature>
<feature type="binding site" evidence="1">
    <location>
        <begin position="155"/>
        <end position="158"/>
    </location>
    <ligand>
        <name>NAD(+)</name>
        <dbReference type="ChEBI" id="CHEBI:57540"/>
    </ligand>
</feature>
<feature type="binding site" evidence="1">
    <location>
        <position position="205"/>
    </location>
    <ligand>
        <name>NAD(+)</name>
        <dbReference type="ChEBI" id="CHEBI:57540"/>
    </ligand>
</feature>
<feature type="binding site" evidence="1">
    <location>
        <begin position="232"/>
        <end position="235"/>
    </location>
    <ligand>
        <name>NAD(+)</name>
        <dbReference type="ChEBI" id="CHEBI:57540"/>
    </ligand>
</feature>
<feature type="binding site" evidence="1">
    <location>
        <position position="255"/>
    </location>
    <ligand>
        <name>NAD(+)</name>
        <dbReference type="ChEBI" id="CHEBI:57540"/>
    </ligand>
</feature>
<comment type="function">
    <text evidence="1">The actual biological function of YdiB remains unclear, nor is it known whether 3-dehydroshikimate or quinate represents the natural substrate. Catalyzes the reversible NAD-dependent reduction of both 3-dehydroshikimate (DHSA) and 3-dehydroquinate to yield shikimate (SA) and quinate, respectively. It can use both NAD or NADP for catalysis, however it has higher catalytic efficiency with NAD.</text>
</comment>
<comment type="catalytic activity">
    <reaction evidence="1">
        <text>L-quinate + NAD(+) = 3-dehydroquinate + NADH + H(+)</text>
        <dbReference type="Rhea" id="RHEA:22364"/>
        <dbReference type="ChEBI" id="CHEBI:15378"/>
        <dbReference type="ChEBI" id="CHEBI:29751"/>
        <dbReference type="ChEBI" id="CHEBI:32364"/>
        <dbReference type="ChEBI" id="CHEBI:57540"/>
        <dbReference type="ChEBI" id="CHEBI:57945"/>
        <dbReference type="EC" id="1.1.1.282"/>
    </reaction>
</comment>
<comment type="catalytic activity">
    <reaction evidence="1">
        <text>L-quinate + NADP(+) = 3-dehydroquinate + NADPH + H(+)</text>
        <dbReference type="Rhea" id="RHEA:18425"/>
        <dbReference type="ChEBI" id="CHEBI:15378"/>
        <dbReference type="ChEBI" id="CHEBI:29751"/>
        <dbReference type="ChEBI" id="CHEBI:32364"/>
        <dbReference type="ChEBI" id="CHEBI:57783"/>
        <dbReference type="ChEBI" id="CHEBI:58349"/>
        <dbReference type="EC" id="1.1.1.282"/>
    </reaction>
</comment>
<comment type="catalytic activity">
    <reaction evidence="1">
        <text>shikimate + NADP(+) = 3-dehydroshikimate + NADPH + H(+)</text>
        <dbReference type="Rhea" id="RHEA:17737"/>
        <dbReference type="ChEBI" id="CHEBI:15378"/>
        <dbReference type="ChEBI" id="CHEBI:16630"/>
        <dbReference type="ChEBI" id="CHEBI:36208"/>
        <dbReference type="ChEBI" id="CHEBI:57783"/>
        <dbReference type="ChEBI" id="CHEBI:58349"/>
        <dbReference type="EC" id="1.1.1.282"/>
    </reaction>
</comment>
<comment type="catalytic activity">
    <reaction evidence="1">
        <text>shikimate + NAD(+) = 3-dehydroshikimate + NADH + H(+)</text>
        <dbReference type="Rhea" id="RHEA:17741"/>
        <dbReference type="ChEBI" id="CHEBI:15378"/>
        <dbReference type="ChEBI" id="CHEBI:16630"/>
        <dbReference type="ChEBI" id="CHEBI:36208"/>
        <dbReference type="ChEBI" id="CHEBI:57540"/>
        <dbReference type="ChEBI" id="CHEBI:57945"/>
        <dbReference type="EC" id="1.1.1.282"/>
    </reaction>
</comment>
<comment type="pathway">
    <text evidence="1">Metabolic intermediate biosynthesis; chorismate biosynthesis; chorismate from D-erythrose 4-phosphate and phosphoenolpyruvate: step 4/7.</text>
</comment>
<comment type="subunit">
    <text evidence="1">Homodimer.</text>
</comment>
<comment type="similarity">
    <text evidence="1">Belongs to the shikimate dehydrogenase family.</text>
</comment>